<keyword id="KW-0002">3D-structure</keyword>
<keyword id="KW-0007">Acetylation</keyword>
<keyword id="KW-1185">Reference proteome</keyword>
<keyword id="KW-0964">Secreted</keyword>
<keyword id="KW-0843">Virulence</keyword>
<accession>O53692</accession>
<accession>F2GM91</accession>
<accession>I6Y3F0</accession>
<accession>Q7DA34</accession>
<feature type="initiator methionine" description="Removed" evidence="13">
    <location>
        <position position="1"/>
    </location>
</feature>
<feature type="chain" id="PRO_0000434997" description="ESAT-6-like protein EsxG">
    <location>
        <begin position="2"/>
        <end position="97"/>
    </location>
</feature>
<feature type="modified residue" description="N-acetylserine" evidence="13">
    <location>
        <position position="2"/>
    </location>
</feature>
<feature type="strand" evidence="14">
    <location>
        <begin position="5"/>
        <end position="7"/>
    </location>
</feature>
<feature type="strand" evidence="14">
    <location>
        <begin position="11"/>
        <end position="13"/>
    </location>
</feature>
<feature type="helix" evidence="14">
    <location>
        <begin position="17"/>
        <end position="39"/>
    </location>
</feature>
<feature type="helix" evidence="14">
    <location>
        <begin position="40"/>
        <end position="42"/>
    </location>
</feature>
<feature type="helix" evidence="14">
    <location>
        <begin position="49"/>
        <end position="76"/>
    </location>
</feature>
<feature type="turn" evidence="14">
    <location>
        <begin position="90"/>
        <end position="92"/>
    </location>
</feature>
<evidence type="ECO:0000269" key="1">
    <source>
    </source>
</evidence>
<evidence type="ECO:0000269" key="2">
    <source>
    </source>
</evidence>
<evidence type="ECO:0000269" key="3">
    <source>
    </source>
</evidence>
<evidence type="ECO:0000269" key="4">
    <source>
    </source>
</evidence>
<evidence type="ECO:0000269" key="5">
    <source>
    </source>
</evidence>
<evidence type="ECO:0000269" key="6">
    <source>
    </source>
</evidence>
<evidence type="ECO:0000303" key="7">
    <source>
    </source>
</evidence>
<evidence type="ECO:0000303" key="8">
    <source>
    </source>
</evidence>
<evidence type="ECO:0000305" key="9"/>
<evidence type="ECO:0000305" key="10">
    <source>
    </source>
</evidence>
<evidence type="ECO:0000305" key="11">
    <source>
    </source>
</evidence>
<evidence type="ECO:0000312" key="12">
    <source>
        <dbReference type="EMBL" id="CCP43017.1"/>
    </source>
</evidence>
<evidence type="ECO:0007744" key="13">
    <source>
    </source>
</evidence>
<evidence type="ECO:0007829" key="14">
    <source>
        <dbReference type="PDB" id="2KG7"/>
    </source>
</evidence>
<reference key="1">
    <citation type="journal article" date="1998" name="Nature">
        <title>Deciphering the biology of Mycobacterium tuberculosis from the complete genome sequence.</title>
        <authorList>
            <person name="Cole S.T."/>
            <person name="Brosch R."/>
            <person name="Parkhill J."/>
            <person name="Garnier T."/>
            <person name="Churcher C.M."/>
            <person name="Harris D.E."/>
            <person name="Gordon S.V."/>
            <person name="Eiglmeier K."/>
            <person name="Gas S."/>
            <person name="Barry C.E. III"/>
            <person name="Tekaia F."/>
            <person name="Badcock K."/>
            <person name="Basham D."/>
            <person name="Brown D."/>
            <person name="Chillingworth T."/>
            <person name="Connor R."/>
            <person name="Davies R.M."/>
            <person name="Devlin K."/>
            <person name="Feltwell T."/>
            <person name="Gentles S."/>
            <person name="Hamlin N."/>
            <person name="Holroyd S."/>
            <person name="Hornsby T."/>
            <person name="Jagels K."/>
            <person name="Krogh A."/>
            <person name="McLean J."/>
            <person name="Moule S."/>
            <person name="Murphy L.D."/>
            <person name="Oliver S."/>
            <person name="Osborne J."/>
            <person name="Quail M.A."/>
            <person name="Rajandream M.A."/>
            <person name="Rogers J."/>
            <person name="Rutter S."/>
            <person name="Seeger K."/>
            <person name="Skelton S."/>
            <person name="Squares S."/>
            <person name="Squares R."/>
            <person name="Sulston J.E."/>
            <person name="Taylor K."/>
            <person name="Whitehead S."/>
            <person name="Barrell B.G."/>
        </authorList>
    </citation>
    <scope>NUCLEOTIDE SEQUENCE [LARGE SCALE GENOMIC DNA]</scope>
    <source>
        <strain>ATCC 25618 / H37Rv</strain>
    </source>
</reference>
<reference key="2">
    <citation type="journal article" date="2004" name="FEMS Microbiol. Lett.">
        <title>Characterisation of complex formation between members of the Mycobacterium tuberculosis complex CFP-10/ESAT-6 protein family: towards an understanding of the rules governing complex formation and thereby functional flexibility.</title>
        <authorList>
            <person name="Lightbody K.L."/>
            <person name="Renshaw P.S."/>
            <person name="Collins M.L."/>
            <person name="Wright R.L."/>
            <person name="Hunt D.M."/>
            <person name="Gordon S.V."/>
            <person name="Hewinson R.G."/>
            <person name="Buxton R.S."/>
            <person name="Williamson R.A."/>
            <person name="Carr M.D."/>
        </authorList>
    </citation>
    <scope>INTERACTION WITH ESXH</scope>
</reference>
<reference key="3">
    <citation type="journal article" date="2008" name="J. Biol. Chem.">
        <title>Molecular features governing the stability and specificity of functional complex formation by Mycobacterium tuberculosis CFP-10/ESAT-6 family proteins.</title>
        <authorList>
            <person name="Lightbody K.L."/>
            <person name="Ilghari D."/>
            <person name="Waters L.C."/>
            <person name="Carey G."/>
            <person name="Bailey M.A."/>
            <person name="Williamson R.A."/>
            <person name="Renshaw P.S."/>
            <person name="Carr M.D."/>
        </authorList>
    </citation>
    <scope>INTERACTION WITH ESXH</scope>
</reference>
<reference key="4">
    <citation type="journal article" date="2009" name="PLoS Pathog.">
        <title>Systematic genetic nomenclature for type VII secretion systems.</title>
        <authorList>
            <person name="Bitter W."/>
            <person name="Houben E.N."/>
            <person name="Bottai D."/>
            <person name="Brodin P."/>
            <person name="Brown E.J."/>
            <person name="Cox J.S."/>
            <person name="Derbyshire K."/>
            <person name="Fortune S.M."/>
            <person name="Gao L.Y."/>
            <person name="Liu J."/>
            <person name="Gey van Pittius N.C."/>
            <person name="Pym A.S."/>
            <person name="Rubin E.J."/>
            <person name="Sherman D.R."/>
            <person name="Cole S.T."/>
            <person name="Brosch R."/>
        </authorList>
    </citation>
    <scope>NOMENCLATURE</scope>
</reference>
<reference key="5">
    <citation type="journal article" date="2010" name="J. Bacteriol.">
        <title>Conservation of structure and protein-protein interactions mediated by the secreted mycobacterial proteins EsxA, EsxB, and EspA.</title>
        <authorList>
            <person name="Callahan B."/>
            <person name="Nguyen K."/>
            <person name="Collins A."/>
            <person name="Valdes K."/>
            <person name="Caplow M."/>
            <person name="Crossman D.K."/>
            <person name="Steyn A.J."/>
            <person name="Eisele L."/>
            <person name="Derbyshire K.M."/>
        </authorList>
    </citation>
    <scope>SUBUNIT</scope>
    <source>
        <strain>ATCC 25618 / H37Rv</strain>
    </source>
</reference>
<reference key="6">
    <citation type="journal article" date="2010" name="FEBS Lett.">
        <title>Stoichiometric protein complex formation and over-expression using the prokaryotic native operon structure.</title>
        <authorList>
            <person name="Poulsen C."/>
            <person name="Holton S."/>
            <person name="Geerlof A."/>
            <person name="Wilmanns M."/>
            <person name="Song Y.H."/>
        </authorList>
    </citation>
    <scope>SUBUNIT</scope>
    <source>
        <strain>ATCC 25618 / H37Rv</strain>
    </source>
</reference>
<reference key="7">
    <citation type="journal article" date="2011" name="Mol. Cell. Proteomics">
        <title>Proteogenomic analysis of Mycobacterium tuberculosis by high resolution mass spectrometry.</title>
        <authorList>
            <person name="Kelkar D.S."/>
            <person name="Kumar D."/>
            <person name="Kumar P."/>
            <person name="Balakrishnan L."/>
            <person name="Muthusamy B."/>
            <person name="Yadav A.K."/>
            <person name="Shrivastava P."/>
            <person name="Marimuthu A."/>
            <person name="Anand S."/>
            <person name="Sundaram H."/>
            <person name="Kingsbury R."/>
            <person name="Harsha H.C."/>
            <person name="Nair B."/>
            <person name="Prasad T.S."/>
            <person name="Chauhan D.S."/>
            <person name="Katoch K."/>
            <person name="Katoch V.M."/>
            <person name="Kumar P."/>
            <person name="Chaerkady R."/>
            <person name="Ramachandran S."/>
            <person name="Dash D."/>
            <person name="Pandey A."/>
        </authorList>
    </citation>
    <scope>ACETYLATION [LARGE SCALE ANALYSIS] AT SER-2</scope>
    <scope>CLEAVAGE OF INITIATOR METHIONINE [LARGE SCALE ANALYSIS]</scope>
    <scope>IDENTIFICATION BY MASS SPECTROMETRY [LARGE SCALE ANALYSIS]</scope>
    <source>
        <strain>ATCC 25618 / H37Rv</strain>
    </source>
</reference>
<reference key="8">
    <citation type="journal article" date="2013" name="PLoS Pathog.">
        <title>Mycobacterium tuberculosis type VII secreted effector EsxH targets host ESCRT to impair trafficking.</title>
        <authorList>
            <person name="Mehra A."/>
            <person name="Zahra A."/>
            <person name="Thompson V."/>
            <person name="Sirisaengtaksin N."/>
            <person name="Wells A."/>
            <person name="Porto M."/>
            <person name="Koester S."/>
            <person name="Penberthy K."/>
            <person name="Kubota Y."/>
            <person name="Dricot A."/>
            <person name="Rogan D."/>
            <person name="Vidal M."/>
            <person name="Hill D.E."/>
            <person name="Bean A.J."/>
            <person name="Philips J.A."/>
        </authorList>
    </citation>
    <scope>FUNCTION IN VIRULENCE</scope>
    <scope>INTERACTION WITH ESXH</scope>
    <source>
        <strain>H37Rv</strain>
    </source>
</reference>
<reference key="9">
    <citation type="journal article" date="2011" name="J. Biol. Chem.">
        <title>Solution structure of the Mycobacterium tuberculosis EsxG.EsxH complex: functional implications and comparisons with other M. tuberculosis Esx family complexes.</title>
        <authorList>
            <person name="Ilghari D."/>
            <person name="Lightbody K.L."/>
            <person name="Veverka V."/>
            <person name="Waters L.C."/>
            <person name="Muskett F.W."/>
            <person name="Renshaw P.S."/>
            <person name="Carr M.D."/>
        </authorList>
    </citation>
    <scope>STRUCTURE BY NMR</scope>
    <scope>INTERACTION WITH ESXH</scope>
    <scope>SUBCELLULAR LOCATION</scope>
</reference>
<name>ESXG_MYCTU</name>
<organism>
    <name type="scientific">Mycobacterium tuberculosis (strain ATCC 25618 / H37Rv)</name>
    <dbReference type="NCBI Taxonomy" id="83332"/>
    <lineage>
        <taxon>Bacteria</taxon>
        <taxon>Bacillati</taxon>
        <taxon>Actinomycetota</taxon>
        <taxon>Actinomycetes</taxon>
        <taxon>Mycobacteriales</taxon>
        <taxon>Mycobacteriaceae</taxon>
        <taxon>Mycobacterium</taxon>
        <taxon>Mycobacterium tuberculosis complex</taxon>
    </lineage>
</organism>
<comment type="function">
    <text evidence="6">EsxG, in complex with EsxH, disrupts ESCRT function and impairs host phagosome maturation, thereby promoting intracellular bacterial growth. The complex acts by interacting, via EsxH, with the host hepatocyte growth factor-regulated tyrosine kinase substrate (HGS/HRS), a component of the ESCRT machinery. EsxG stabilizes EsxH in the host cytosol.</text>
</comment>
<comment type="subunit">
    <text evidence="1 2 3 4 5 6">Forms a tight 1:1 complex with EsxH.</text>
</comment>
<comment type="interaction">
    <interactant intactId="EBI-6409586">
        <id>O53692</id>
    </interactant>
    <interactant intactId="EBI-6409599">
        <id>P9WNK3</id>
        <label>esxH</label>
    </interactant>
    <organismsDiffer>false</organismsDiffer>
    <experiments>4</experiments>
</comment>
<comment type="subcellular location">
    <subcellularLocation>
        <location evidence="11">Secreted</location>
    </subcellularLocation>
    <text evidence="11">Secreted via the ESX-3 / type VII secretion system (T7SS).</text>
</comment>
<comment type="miscellaneous">
    <text evidence="3">To improve expression in E.coli the proteins were cloned as a single protein in the order esxH-esxG with a cleavable thrombin tag (PubMed:19854905).</text>
</comment>
<comment type="similarity">
    <text evidence="10">Belongs to the WXG100 family. CFP-10 subfamily.</text>
</comment>
<dbReference type="EMBL" id="AL123456">
    <property type="protein sequence ID" value="CCP43017.1"/>
    <property type="molecule type" value="Genomic_DNA"/>
</dbReference>
<dbReference type="RefSeq" id="NP_214801.1">
    <property type="nucleotide sequence ID" value="NC_000962.3"/>
</dbReference>
<dbReference type="RefSeq" id="WP_003401503.1">
    <property type="nucleotide sequence ID" value="NZ_NVQJ01000026.1"/>
</dbReference>
<dbReference type="PDB" id="2KG7">
    <property type="method" value="NMR"/>
    <property type="chains" value="A=1-97"/>
</dbReference>
<dbReference type="PDBsum" id="2KG7"/>
<dbReference type="SMR" id="O53692"/>
<dbReference type="FunCoup" id="O53692">
    <property type="interactions" value="1"/>
</dbReference>
<dbReference type="IntAct" id="O53692">
    <property type="interactions" value="1"/>
</dbReference>
<dbReference type="MINT" id="O53692"/>
<dbReference type="STRING" id="83332.Rv0287"/>
<dbReference type="iPTMnet" id="O53692"/>
<dbReference type="PaxDb" id="83332-Rv0287"/>
<dbReference type="DNASU" id="886604"/>
<dbReference type="GeneID" id="45424261"/>
<dbReference type="GeneID" id="886604"/>
<dbReference type="KEGG" id="mtu:Rv0287"/>
<dbReference type="KEGG" id="mtv:RVBD_0287"/>
<dbReference type="PATRIC" id="fig|83332.111.peg.323"/>
<dbReference type="TubercuList" id="Rv0287"/>
<dbReference type="eggNOG" id="ENOG5030NJS">
    <property type="taxonomic scope" value="Bacteria"/>
</dbReference>
<dbReference type="HOGENOM" id="CLU_161983_0_0_11"/>
<dbReference type="InParanoid" id="O53692"/>
<dbReference type="OrthoDB" id="4750882at2"/>
<dbReference type="PhylomeDB" id="O53692"/>
<dbReference type="Reactome" id="R-HSA-9635644">
    <property type="pathway name" value="Inhibition of membrane repair"/>
</dbReference>
<dbReference type="Reactome" id="R-HSA-9636383">
    <property type="pathway name" value="Prevention of phagosomal-lysosomal fusion"/>
</dbReference>
<dbReference type="EvolutionaryTrace" id="O53692"/>
<dbReference type="Proteomes" id="UP000001584">
    <property type="component" value="Chromosome"/>
</dbReference>
<dbReference type="GO" id="GO:0005829">
    <property type="term" value="C:cytosol"/>
    <property type="evidence" value="ECO:0000304"/>
    <property type="project" value="Reactome"/>
</dbReference>
<dbReference type="GO" id="GO:0005576">
    <property type="term" value="C:extracellular region"/>
    <property type="evidence" value="ECO:0000314"/>
    <property type="project" value="MTBBASE"/>
</dbReference>
<dbReference type="GO" id="GO:0097013">
    <property type="term" value="C:phagocytic vesicle lumen"/>
    <property type="evidence" value="ECO:0000304"/>
    <property type="project" value="Reactome"/>
</dbReference>
<dbReference type="FunFam" id="1.10.287.1060:FF:000013">
    <property type="entry name" value="ESAT-6 like protein EsxS"/>
    <property type="match status" value="1"/>
</dbReference>
<dbReference type="Gene3D" id="1.10.287.1060">
    <property type="entry name" value="ESAT-6-like"/>
    <property type="match status" value="1"/>
</dbReference>
<dbReference type="InterPro" id="IPR036689">
    <property type="entry name" value="ESAT-6-like_sf"/>
</dbReference>
<dbReference type="InterPro" id="IPR010310">
    <property type="entry name" value="T7SS_ESAT-6-like"/>
</dbReference>
<dbReference type="Pfam" id="PF06013">
    <property type="entry name" value="WXG100"/>
    <property type="match status" value="1"/>
</dbReference>
<dbReference type="SUPFAM" id="SSF140453">
    <property type="entry name" value="EsxAB dimer-like"/>
    <property type="match status" value="1"/>
</dbReference>
<proteinExistence type="evidence at protein level"/>
<gene>
    <name evidence="7 8" type="primary">esxG</name>
    <name evidence="12" type="ordered locus">Rv0287</name>
</gene>
<protein>
    <recommendedName>
        <fullName evidence="9">ESAT-6-like protein EsxG</fullName>
    </recommendedName>
    <alternativeName>
        <fullName evidence="9">Conserved protein TB9.8</fullName>
    </alternativeName>
</protein>
<sequence length="97" mass="9778">MSLLDAHIPQLVASQSAFAAKAGLMRHTIGQAEQAAMSAQAFHQGESSAAFQAAHARFVAAAAKVNTLLDVAQANLGEAAGTYVAADAAAASTYTGF</sequence>